<sequence>MRLILLGAPGAGKGTQANFIKEKFGIPQISTGDMLRAAVKAGTPLGVEAKTYMDEGKLVPDSLIIGLVKERLKEADCANGYLFDGFPRTIAQADAMKEAGVAIDYVLEIDVPFSEIIERMSGRRTHPASGRTYHVKFNPPKVEGKDDVTGEPLVQRDDDKEETVKKRLDVYEAQTKPLITYYGDWARRGAENGLKAPAYRKISGLGAVEEIRARVFDALK</sequence>
<gene>
    <name evidence="1" type="primary">adk</name>
    <name type="ordered locus">BMA10229_A1049</name>
</gene>
<protein>
    <recommendedName>
        <fullName evidence="1">Adenylate kinase</fullName>
        <shortName evidence="1">AK</shortName>
        <ecNumber evidence="1">2.7.4.3</ecNumber>
    </recommendedName>
    <alternativeName>
        <fullName evidence="1">ATP-AMP transphosphorylase</fullName>
    </alternativeName>
    <alternativeName>
        <fullName evidence="1">ATP:AMP phosphotransferase</fullName>
    </alternativeName>
    <alternativeName>
        <fullName evidence="1">Adenylate monophosphate kinase</fullName>
    </alternativeName>
</protein>
<proteinExistence type="inferred from homology"/>
<name>KAD_BURM9</name>
<keyword id="KW-0067">ATP-binding</keyword>
<keyword id="KW-0963">Cytoplasm</keyword>
<keyword id="KW-0418">Kinase</keyword>
<keyword id="KW-0545">Nucleotide biosynthesis</keyword>
<keyword id="KW-0547">Nucleotide-binding</keyword>
<keyword id="KW-0808">Transferase</keyword>
<reference key="1">
    <citation type="journal article" date="2010" name="Genome Biol. Evol.">
        <title>Continuing evolution of Burkholderia mallei through genome reduction and large-scale rearrangements.</title>
        <authorList>
            <person name="Losada L."/>
            <person name="Ronning C.M."/>
            <person name="DeShazer D."/>
            <person name="Woods D."/>
            <person name="Fedorova N."/>
            <person name="Kim H.S."/>
            <person name="Shabalina S.A."/>
            <person name="Pearson T.R."/>
            <person name="Brinkac L."/>
            <person name="Tan P."/>
            <person name="Nandi T."/>
            <person name="Crabtree J."/>
            <person name="Badger J."/>
            <person name="Beckstrom-Sternberg S."/>
            <person name="Saqib M."/>
            <person name="Schutzer S.E."/>
            <person name="Keim P."/>
            <person name="Nierman W.C."/>
        </authorList>
    </citation>
    <scope>NUCLEOTIDE SEQUENCE [LARGE SCALE GENOMIC DNA]</scope>
    <source>
        <strain>NCTC 10229</strain>
    </source>
</reference>
<evidence type="ECO:0000255" key="1">
    <source>
        <dbReference type="HAMAP-Rule" id="MF_00235"/>
    </source>
</evidence>
<feature type="chain" id="PRO_1000058799" description="Adenylate kinase">
    <location>
        <begin position="1"/>
        <end position="220"/>
    </location>
</feature>
<feature type="region of interest" description="NMP" evidence="1">
    <location>
        <begin position="30"/>
        <end position="59"/>
    </location>
</feature>
<feature type="region of interest" description="LID" evidence="1">
    <location>
        <begin position="122"/>
        <end position="159"/>
    </location>
</feature>
<feature type="binding site" evidence="1">
    <location>
        <begin position="10"/>
        <end position="15"/>
    </location>
    <ligand>
        <name>ATP</name>
        <dbReference type="ChEBI" id="CHEBI:30616"/>
    </ligand>
</feature>
<feature type="binding site" evidence="1">
    <location>
        <position position="31"/>
    </location>
    <ligand>
        <name>AMP</name>
        <dbReference type="ChEBI" id="CHEBI:456215"/>
    </ligand>
</feature>
<feature type="binding site" evidence="1">
    <location>
        <position position="36"/>
    </location>
    <ligand>
        <name>AMP</name>
        <dbReference type="ChEBI" id="CHEBI:456215"/>
    </ligand>
</feature>
<feature type="binding site" evidence="1">
    <location>
        <begin position="57"/>
        <end position="59"/>
    </location>
    <ligand>
        <name>AMP</name>
        <dbReference type="ChEBI" id="CHEBI:456215"/>
    </ligand>
</feature>
<feature type="binding site" evidence="1">
    <location>
        <begin position="85"/>
        <end position="88"/>
    </location>
    <ligand>
        <name>AMP</name>
        <dbReference type="ChEBI" id="CHEBI:456215"/>
    </ligand>
</feature>
<feature type="binding site" evidence="1">
    <location>
        <position position="92"/>
    </location>
    <ligand>
        <name>AMP</name>
        <dbReference type="ChEBI" id="CHEBI:456215"/>
    </ligand>
</feature>
<feature type="binding site" evidence="1">
    <location>
        <position position="123"/>
    </location>
    <ligand>
        <name>ATP</name>
        <dbReference type="ChEBI" id="CHEBI:30616"/>
    </ligand>
</feature>
<feature type="binding site" evidence="1">
    <location>
        <begin position="132"/>
        <end position="133"/>
    </location>
    <ligand>
        <name>ATP</name>
        <dbReference type="ChEBI" id="CHEBI:30616"/>
    </ligand>
</feature>
<feature type="binding site" evidence="1">
    <location>
        <position position="156"/>
    </location>
    <ligand>
        <name>AMP</name>
        <dbReference type="ChEBI" id="CHEBI:456215"/>
    </ligand>
</feature>
<feature type="binding site" evidence="1">
    <location>
        <position position="167"/>
    </location>
    <ligand>
        <name>AMP</name>
        <dbReference type="ChEBI" id="CHEBI:456215"/>
    </ligand>
</feature>
<feature type="binding site" evidence="1">
    <location>
        <position position="206"/>
    </location>
    <ligand>
        <name>ATP</name>
        <dbReference type="ChEBI" id="CHEBI:30616"/>
    </ligand>
</feature>
<organism>
    <name type="scientific">Burkholderia mallei (strain NCTC 10229)</name>
    <dbReference type="NCBI Taxonomy" id="412022"/>
    <lineage>
        <taxon>Bacteria</taxon>
        <taxon>Pseudomonadati</taxon>
        <taxon>Pseudomonadota</taxon>
        <taxon>Betaproteobacteria</taxon>
        <taxon>Burkholderiales</taxon>
        <taxon>Burkholderiaceae</taxon>
        <taxon>Burkholderia</taxon>
        <taxon>pseudomallei group</taxon>
    </lineage>
</organism>
<comment type="function">
    <text evidence="1">Catalyzes the reversible transfer of the terminal phosphate group between ATP and AMP. Plays an important role in cellular energy homeostasis and in adenine nucleotide metabolism.</text>
</comment>
<comment type="catalytic activity">
    <reaction evidence="1">
        <text>AMP + ATP = 2 ADP</text>
        <dbReference type="Rhea" id="RHEA:12973"/>
        <dbReference type="ChEBI" id="CHEBI:30616"/>
        <dbReference type="ChEBI" id="CHEBI:456215"/>
        <dbReference type="ChEBI" id="CHEBI:456216"/>
        <dbReference type="EC" id="2.7.4.3"/>
    </reaction>
</comment>
<comment type="pathway">
    <text evidence="1">Purine metabolism; AMP biosynthesis via salvage pathway; AMP from ADP: step 1/1.</text>
</comment>
<comment type="subunit">
    <text evidence="1">Monomer.</text>
</comment>
<comment type="subcellular location">
    <subcellularLocation>
        <location evidence="1">Cytoplasm</location>
    </subcellularLocation>
</comment>
<comment type="domain">
    <text evidence="1">Consists of three domains, a large central CORE domain and two small peripheral domains, NMPbind and LID, which undergo movements during catalysis. The LID domain closes over the site of phosphoryl transfer upon ATP binding. Assembling and dissambling the active center during each catalytic cycle provides an effective means to prevent ATP hydrolysis.</text>
</comment>
<comment type="similarity">
    <text evidence="1">Belongs to the adenylate kinase family.</text>
</comment>
<accession>A2S516</accession>
<dbReference type="EC" id="2.7.4.3" evidence="1"/>
<dbReference type="EMBL" id="CP000546">
    <property type="protein sequence ID" value="ABN01301.1"/>
    <property type="molecule type" value="Genomic_DNA"/>
</dbReference>
<dbReference type="RefSeq" id="WP_004185840.1">
    <property type="nucleotide sequence ID" value="NC_008836.1"/>
</dbReference>
<dbReference type="SMR" id="A2S516"/>
<dbReference type="GeneID" id="93059382"/>
<dbReference type="KEGG" id="bml:BMA10229_A1049"/>
<dbReference type="HOGENOM" id="CLU_032354_1_2_4"/>
<dbReference type="UniPathway" id="UPA00588">
    <property type="reaction ID" value="UER00649"/>
</dbReference>
<dbReference type="Proteomes" id="UP000002283">
    <property type="component" value="Chromosome I"/>
</dbReference>
<dbReference type="GO" id="GO:0005737">
    <property type="term" value="C:cytoplasm"/>
    <property type="evidence" value="ECO:0007669"/>
    <property type="project" value="UniProtKB-SubCell"/>
</dbReference>
<dbReference type="GO" id="GO:0004017">
    <property type="term" value="F:adenylate kinase activity"/>
    <property type="evidence" value="ECO:0007669"/>
    <property type="project" value="UniProtKB-UniRule"/>
</dbReference>
<dbReference type="GO" id="GO:0005524">
    <property type="term" value="F:ATP binding"/>
    <property type="evidence" value="ECO:0007669"/>
    <property type="project" value="UniProtKB-UniRule"/>
</dbReference>
<dbReference type="GO" id="GO:0044209">
    <property type="term" value="P:AMP salvage"/>
    <property type="evidence" value="ECO:0007669"/>
    <property type="project" value="UniProtKB-UniRule"/>
</dbReference>
<dbReference type="CDD" id="cd01428">
    <property type="entry name" value="ADK"/>
    <property type="match status" value="1"/>
</dbReference>
<dbReference type="FunFam" id="3.40.50.300:FF:000106">
    <property type="entry name" value="Adenylate kinase mitochondrial"/>
    <property type="match status" value="1"/>
</dbReference>
<dbReference type="Gene3D" id="3.40.50.300">
    <property type="entry name" value="P-loop containing nucleotide triphosphate hydrolases"/>
    <property type="match status" value="1"/>
</dbReference>
<dbReference type="HAMAP" id="MF_00235">
    <property type="entry name" value="Adenylate_kinase_Adk"/>
    <property type="match status" value="1"/>
</dbReference>
<dbReference type="InterPro" id="IPR006259">
    <property type="entry name" value="Adenyl_kin_sub"/>
</dbReference>
<dbReference type="InterPro" id="IPR000850">
    <property type="entry name" value="Adenylat/UMP-CMP_kin"/>
</dbReference>
<dbReference type="InterPro" id="IPR033690">
    <property type="entry name" value="Adenylat_kinase_CS"/>
</dbReference>
<dbReference type="InterPro" id="IPR007862">
    <property type="entry name" value="Adenylate_kinase_lid-dom"/>
</dbReference>
<dbReference type="InterPro" id="IPR027417">
    <property type="entry name" value="P-loop_NTPase"/>
</dbReference>
<dbReference type="NCBIfam" id="TIGR01351">
    <property type="entry name" value="adk"/>
    <property type="match status" value="1"/>
</dbReference>
<dbReference type="NCBIfam" id="NF001379">
    <property type="entry name" value="PRK00279.1-1"/>
    <property type="match status" value="1"/>
</dbReference>
<dbReference type="NCBIfam" id="NF001380">
    <property type="entry name" value="PRK00279.1-2"/>
    <property type="match status" value="1"/>
</dbReference>
<dbReference type="NCBIfam" id="NF001381">
    <property type="entry name" value="PRK00279.1-3"/>
    <property type="match status" value="1"/>
</dbReference>
<dbReference type="NCBIfam" id="NF011100">
    <property type="entry name" value="PRK14527.1"/>
    <property type="match status" value="1"/>
</dbReference>
<dbReference type="PANTHER" id="PTHR23359">
    <property type="entry name" value="NUCLEOTIDE KINASE"/>
    <property type="match status" value="1"/>
</dbReference>
<dbReference type="Pfam" id="PF00406">
    <property type="entry name" value="ADK"/>
    <property type="match status" value="1"/>
</dbReference>
<dbReference type="Pfam" id="PF05191">
    <property type="entry name" value="ADK_lid"/>
    <property type="match status" value="1"/>
</dbReference>
<dbReference type="PRINTS" id="PR00094">
    <property type="entry name" value="ADENYLTKNASE"/>
</dbReference>
<dbReference type="SUPFAM" id="SSF52540">
    <property type="entry name" value="P-loop containing nucleoside triphosphate hydrolases"/>
    <property type="match status" value="1"/>
</dbReference>
<dbReference type="PROSITE" id="PS00113">
    <property type="entry name" value="ADENYLATE_KINASE"/>
    <property type="match status" value="1"/>
</dbReference>